<evidence type="ECO:0000250" key="1">
    <source>
        <dbReference type="UniProtKB" id="Q7XXN8"/>
    </source>
</evidence>
<evidence type="ECO:0000255" key="2"/>
<evidence type="ECO:0000255" key="3">
    <source>
        <dbReference type="PROSITE-ProRule" id="PRU00498"/>
    </source>
</evidence>
<evidence type="ECO:0000256" key="4">
    <source>
        <dbReference type="SAM" id="MobiDB-lite"/>
    </source>
</evidence>
<evidence type="ECO:0000303" key="5">
    <source>
    </source>
</evidence>
<evidence type="ECO:0000303" key="6">
    <source>
    </source>
</evidence>
<evidence type="ECO:0000303" key="7">
    <source>
    </source>
</evidence>
<evidence type="ECO:0000305" key="8"/>
<evidence type="ECO:0000312" key="9">
    <source>
        <dbReference type="Araport" id="AT3G46613"/>
    </source>
</evidence>
<evidence type="ECO:0000312" key="10">
    <source>
        <dbReference type="EMBL" id="AL133314"/>
    </source>
</evidence>
<feature type="chain" id="PRO_0000452783" description="Small polypeptide DEVIL 15">
    <location>
        <begin position="1"/>
        <end position="144"/>
    </location>
</feature>
<feature type="transmembrane region" description="Helical" evidence="2">
    <location>
        <begin position="104"/>
        <end position="120"/>
    </location>
</feature>
<feature type="region of interest" description="Disordered" evidence="4">
    <location>
        <begin position="22"/>
        <end position="63"/>
    </location>
</feature>
<feature type="region of interest" description="Required for DVL/RTFL small polypeptide activity" evidence="1">
    <location>
        <begin position="111"/>
        <end position="142"/>
    </location>
</feature>
<feature type="glycosylation site" description="N-linked (GlcNAc...) asparagine" evidence="3">
    <location>
        <position position="8"/>
    </location>
</feature>
<name>DVL15_ARATH</name>
<organism>
    <name type="scientific">Arabidopsis thaliana</name>
    <name type="common">Mouse-ear cress</name>
    <dbReference type="NCBI Taxonomy" id="3702"/>
    <lineage>
        <taxon>Eukaryota</taxon>
        <taxon>Viridiplantae</taxon>
        <taxon>Streptophyta</taxon>
        <taxon>Embryophyta</taxon>
        <taxon>Tracheophyta</taxon>
        <taxon>Spermatophyta</taxon>
        <taxon>Magnoliopsida</taxon>
        <taxon>eudicotyledons</taxon>
        <taxon>Gunneridae</taxon>
        <taxon>Pentapetalae</taxon>
        <taxon>rosids</taxon>
        <taxon>malvids</taxon>
        <taxon>Brassicales</taxon>
        <taxon>Brassicaceae</taxon>
        <taxon>Camelineae</taxon>
        <taxon>Arabidopsis</taxon>
    </lineage>
</organism>
<reference key="1">
    <citation type="journal article" date="2004" name="Plant J.">
        <title>DVL, a novel class of small polypeptides: overexpression alters Arabidopsis development.</title>
        <authorList>
            <person name="Wen J."/>
            <person name="Lease K.A."/>
            <person name="Walker J.C."/>
        </authorList>
    </citation>
    <scope>NUCLEOTIDE SEQUENCE [MRNA]</scope>
    <scope>GENE FAMILY</scope>
    <scope>NOMENCLATURE</scope>
    <source>
        <strain>cv. Columbia</strain>
    </source>
</reference>
<reference key="2">
    <citation type="journal article" date="2000" name="Nature">
        <title>Sequence and analysis of chromosome 3 of the plant Arabidopsis thaliana.</title>
        <authorList>
            <person name="Salanoubat M."/>
            <person name="Lemcke K."/>
            <person name="Rieger M."/>
            <person name="Ansorge W."/>
            <person name="Unseld M."/>
            <person name="Fartmann B."/>
            <person name="Valle G."/>
            <person name="Bloecker H."/>
            <person name="Perez-Alonso M."/>
            <person name="Obermaier B."/>
            <person name="Delseny M."/>
            <person name="Boutry M."/>
            <person name="Grivell L.A."/>
            <person name="Mache R."/>
            <person name="Puigdomenech P."/>
            <person name="De Simone V."/>
            <person name="Choisne N."/>
            <person name="Artiguenave F."/>
            <person name="Robert C."/>
            <person name="Brottier P."/>
            <person name="Wincker P."/>
            <person name="Cattolico L."/>
            <person name="Weissenbach J."/>
            <person name="Saurin W."/>
            <person name="Quetier F."/>
            <person name="Schaefer M."/>
            <person name="Mueller-Auer S."/>
            <person name="Gabel C."/>
            <person name="Fuchs M."/>
            <person name="Benes V."/>
            <person name="Wurmbach E."/>
            <person name="Drzonek H."/>
            <person name="Erfle H."/>
            <person name="Jordan N."/>
            <person name="Bangert S."/>
            <person name="Wiedelmann R."/>
            <person name="Kranz H."/>
            <person name="Voss H."/>
            <person name="Holland R."/>
            <person name="Brandt P."/>
            <person name="Nyakatura G."/>
            <person name="Vezzi A."/>
            <person name="D'Angelo M."/>
            <person name="Pallavicini A."/>
            <person name="Toppo S."/>
            <person name="Simionati B."/>
            <person name="Conrad A."/>
            <person name="Hornischer K."/>
            <person name="Kauer G."/>
            <person name="Loehnert T.-H."/>
            <person name="Nordsiek G."/>
            <person name="Reichelt J."/>
            <person name="Scharfe M."/>
            <person name="Schoen O."/>
            <person name="Bargues M."/>
            <person name="Terol J."/>
            <person name="Climent J."/>
            <person name="Navarro P."/>
            <person name="Collado C."/>
            <person name="Perez-Perez A."/>
            <person name="Ottenwaelder B."/>
            <person name="Duchemin D."/>
            <person name="Cooke R."/>
            <person name="Laudie M."/>
            <person name="Berger-Llauro C."/>
            <person name="Purnelle B."/>
            <person name="Masuy D."/>
            <person name="de Haan M."/>
            <person name="Maarse A.C."/>
            <person name="Alcaraz J.-P."/>
            <person name="Cottet A."/>
            <person name="Casacuberta E."/>
            <person name="Monfort A."/>
            <person name="Argiriou A."/>
            <person name="Flores M."/>
            <person name="Liguori R."/>
            <person name="Vitale D."/>
            <person name="Mannhaupt G."/>
            <person name="Haase D."/>
            <person name="Schoof H."/>
            <person name="Rudd S."/>
            <person name="Zaccaria P."/>
            <person name="Mewes H.-W."/>
            <person name="Mayer K.F.X."/>
            <person name="Kaul S."/>
            <person name="Town C.D."/>
            <person name="Koo H.L."/>
            <person name="Tallon L.J."/>
            <person name="Jenkins J."/>
            <person name="Rooney T."/>
            <person name="Rizzo M."/>
            <person name="Walts A."/>
            <person name="Utterback T."/>
            <person name="Fujii C.Y."/>
            <person name="Shea T.P."/>
            <person name="Creasy T.H."/>
            <person name="Haas B."/>
            <person name="Maiti R."/>
            <person name="Wu D."/>
            <person name="Peterson J."/>
            <person name="Van Aken S."/>
            <person name="Pai G."/>
            <person name="Militscher J."/>
            <person name="Sellers P."/>
            <person name="Gill J.E."/>
            <person name="Feldblyum T.V."/>
            <person name="Preuss D."/>
            <person name="Lin X."/>
            <person name="Nierman W.C."/>
            <person name="Salzberg S.L."/>
            <person name="White O."/>
            <person name="Venter J.C."/>
            <person name="Fraser C.M."/>
            <person name="Kaneko T."/>
            <person name="Nakamura Y."/>
            <person name="Sato S."/>
            <person name="Kato T."/>
            <person name="Asamizu E."/>
            <person name="Sasamoto S."/>
            <person name="Kimura T."/>
            <person name="Idesawa K."/>
            <person name="Kawashima K."/>
            <person name="Kishida Y."/>
            <person name="Kiyokawa C."/>
            <person name="Kohara M."/>
            <person name="Matsumoto M."/>
            <person name="Matsuno A."/>
            <person name="Muraki A."/>
            <person name="Nakayama S."/>
            <person name="Nakazaki N."/>
            <person name="Shinpo S."/>
            <person name="Takeuchi C."/>
            <person name="Wada T."/>
            <person name="Watanabe A."/>
            <person name="Yamada M."/>
            <person name="Yasuda M."/>
            <person name="Tabata S."/>
        </authorList>
    </citation>
    <scope>NUCLEOTIDE SEQUENCE [LARGE SCALE GENOMIC DNA]</scope>
    <source>
        <strain>cv. Columbia</strain>
    </source>
</reference>
<reference key="3">
    <citation type="journal article" date="2017" name="Plant J.">
        <title>Araport11: a complete reannotation of the Arabidopsis thaliana reference genome.</title>
        <authorList>
            <person name="Cheng C.Y."/>
            <person name="Krishnakumar V."/>
            <person name="Chan A.P."/>
            <person name="Thibaud-Nissen F."/>
            <person name="Schobel S."/>
            <person name="Town C.D."/>
        </authorList>
    </citation>
    <scope>GENOME REANNOTATION</scope>
    <source>
        <strain>cv. Columbia</strain>
    </source>
</reference>
<reference key="4">
    <citation type="journal article" date="2004" name="Plant J.">
        <title>Overexpression of a novel small peptide ROTUNDIFOLIA4 decreases cell proliferation and alters leaf shape in Arabidopsis thaliana.</title>
        <authorList>
            <person name="Narita N.N."/>
            <person name="Moore S."/>
            <person name="Horiguchi G."/>
            <person name="Kubo M."/>
            <person name="Demura T."/>
            <person name="Fukuda H."/>
            <person name="Goodrich J."/>
            <person name="Tsukaya H."/>
        </authorList>
    </citation>
    <scope>GENE FAMILY</scope>
    <source>
        <strain>cv. Columbia</strain>
        <strain>cv. Landsberg erecta</strain>
    </source>
</reference>
<reference key="5">
    <citation type="journal article" date="2012" name="J. Exp. Bot.">
        <title>DVL genes play a role in the coordination of socket cell recruitment and differentiation.</title>
        <authorList>
            <person name="Valdivia E.R."/>
            <person name="Chevalier D."/>
            <person name="Sampedro J."/>
            <person name="Taylor I."/>
            <person name="Niederhuth C.E."/>
            <person name="Walker J.C."/>
        </authorList>
    </citation>
    <scope>FUNCTION</scope>
    <source>
        <strain>cv. Columbia</strain>
    </source>
</reference>
<reference key="6">
    <citation type="journal article" date="2015" name="J. Plant Res.">
        <title>Comparative analysis of the RTFL peptide family on the control of plant organogenesis.</title>
        <authorList>
            <person name="Guo P."/>
            <person name="Yoshimura A."/>
            <person name="Ishikawa N."/>
            <person name="Yamaguchi T."/>
            <person name="Guo Y."/>
            <person name="Tsukaya H."/>
        </authorList>
    </citation>
    <scope>REVIEW</scope>
    <scope>GENE FAMILY</scope>
    <scope>NOMENCLATURE</scope>
    <source>
        <strain>cv. Columbia</strain>
    </source>
</reference>
<sequence length="144" mass="16106">MDVEKLWNHTKKDSIFQTTHFSSSSKPFFTRSFSTKTSSSPSSKSHFTRSFSTKPSSSSSSSDLIFRRSFSAKPKTSKSLLLSRSCSTKSSADLSSKSSSLSRILSKKGASVTGKCFKVAKEHKSRFYIIKRCVLMLVCWHKHS</sequence>
<protein>
    <recommendedName>
        <fullName evidence="5">Small polypeptide DEVIL 15</fullName>
    </recommendedName>
    <alternativeName>
        <fullName evidence="6">Small polypeptide ROTUNDIFOLIA LIKE 4</fullName>
        <shortName evidence="6">Small polypeptide ROT-FOUR-LIKE 4</shortName>
    </alternativeName>
</protein>
<dbReference type="EMBL" id="BK001758">
    <property type="protein sequence ID" value="DAA02286.1"/>
    <property type="molecule type" value="Genomic_DNA"/>
</dbReference>
<dbReference type="EMBL" id="AL133314">
    <property type="status" value="NOT_ANNOTATED_CDS"/>
    <property type="molecule type" value="Genomic_DNA"/>
</dbReference>
<dbReference type="EMBL" id="CP002686">
    <property type="protein sequence ID" value="AEE78182.1"/>
    <property type="molecule type" value="Genomic_DNA"/>
</dbReference>
<dbReference type="RefSeq" id="NP_001078252.1">
    <property type="nucleotide sequence ID" value="NM_001084783.2"/>
</dbReference>
<dbReference type="STRING" id="3702.Q6IM86"/>
<dbReference type="GlyCosmos" id="Q6IM86">
    <property type="glycosylation" value="1 site, No reported glycans"/>
</dbReference>
<dbReference type="GlyGen" id="Q6IM86">
    <property type="glycosylation" value="1 site"/>
</dbReference>
<dbReference type="PaxDb" id="3702-AT3G46613.1"/>
<dbReference type="EnsemblPlants" id="AT3G46613.1">
    <property type="protein sequence ID" value="AT3G46613.1"/>
    <property type="gene ID" value="AT3G46613"/>
</dbReference>
<dbReference type="GeneID" id="5008070"/>
<dbReference type="Gramene" id="AT3G46613.1">
    <property type="protein sequence ID" value="AT3G46613.1"/>
    <property type="gene ID" value="AT3G46613"/>
</dbReference>
<dbReference type="KEGG" id="ath:AT3G46613"/>
<dbReference type="Araport" id="AT3G46613"/>
<dbReference type="TAIR" id="AT3G46613">
    <property type="gene designation" value="RTFL4"/>
</dbReference>
<dbReference type="HOGENOM" id="CLU_150897_0_0_1"/>
<dbReference type="InParanoid" id="Q6IM86"/>
<dbReference type="OMA" id="KSHFTRS"/>
<dbReference type="PhylomeDB" id="Q6IM86"/>
<dbReference type="PRO" id="PR:Q6IM86"/>
<dbReference type="Proteomes" id="UP000006548">
    <property type="component" value="Chromosome 3"/>
</dbReference>
<dbReference type="ExpressionAtlas" id="Q6IM86">
    <property type="expression patterns" value="baseline and differential"/>
</dbReference>
<dbReference type="GO" id="GO:0005886">
    <property type="term" value="C:plasma membrane"/>
    <property type="evidence" value="ECO:0000250"/>
    <property type="project" value="UniProtKB"/>
</dbReference>
<dbReference type="GO" id="GO:0008285">
    <property type="term" value="P:negative regulation of cell population proliferation"/>
    <property type="evidence" value="ECO:0000250"/>
    <property type="project" value="UniProtKB"/>
</dbReference>
<dbReference type="GO" id="GO:0048367">
    <property type="term" value="P:shoot system development"/>
    <property type="evidence" value="ECO:0000250"/>
    <property type="project" value="TAIR"/>
</dbReference>
<dbReference type="InterPro" id="IPR012552">
    <property type="entry name" value="DVL"/>
</dbReference>
<dbReference type="InterPro" id="IPR052692">
    <property type="entry name" value="DVL_RTFL_polypeptides"/>
</dbReference>
<dbReference type="PANTHER" id="PTHR47596">
    <property type="entry name" value="DVL13"/>
    <property type="match status" value="1"/>
</dbReference>
<dbReference type="PANTHER" id="PTHR47596:SF9">
    <property type="entry name" value="SMALL POLYPEPTIDE DEVIL 15-RELATED"/>
    <property type="match status" value="1"/>
</dbReference>
<dbReference type="Pfam" id="PF08137">
    <property type="entry name" value="DVL"/>
    <property type="match status" value="1"/>
</dbReference>
<keyword id="KW-1003">Cell membrane</keyword>
<keyword id="KW-0217">Developmental protein</keyword>
<keyword id="KW-0325">Glycoprotein</keyword>
<keyword id="KW-0472">Membrane</keyword>
<keyword id="KW-1185">Reference proteome</keyword>
<keyword id="KW-0812">Transmembrane</keyword>
<keyword id="KW-1133">Transmembrane helix</keyword>
<accession>Q6IM86</accession>
<gene>
    <name evidence="5" type="primary">DVL15</name>
    <name evidence="6" type="synonym">RTFL4</name>
    <name evidence="9" type="ordered locus">At3g46613</name>
    <name evidence="10" type="ORF">F12A12</name>
</gene>
<comment type="function">
    <text evidence="7">Small polypeptide acting as a regulatory molecule which coordinates cellular responses required for differentiation, growth and development, probably by restricting polar cell proliferation in lateral organs and coordinating socket cell recruitment and differentiation at trichome sites.</text>
</comment>
<comment type="subcellular location">
    <subcellularLocation>
        <location evidence="1">Cell membrane</location>
        <topology evidence="2">Single-pass membrane protein</topology>
    </subcellularLocation>
</comment>
<comment type="similarity">
    <text evidence="8">Belongs to the DVL/RTFL small polypeptides family.</text>
</comment>
<proteinExistence type="evidence at transcript level"/>